<feature type="chain" id="PRO_0000291489" description="Putative glutamate--cysteine ligase 2">
    <location>
        <begin position="1"/>
        <end position="372"/>
    </location>
</feature>
<organism>
    <name type="scientific">Escherichia coli O1:K1 / APEC</name>
    <dbReference type="NCBI Taxonomy" id="405955"/>
    <lineage>
        <taxon>Bacteria</taxon>
        <taxon>Pseudomonadati</taxon>
        <taxon>Pseudomonadota</taxon>
        <taxon>Gammaproteobacteria</taxon>
        <taxon>Enterobacterales</taxon>
        <taxon>Enterobacteriaceae</taxon>
        <taxon>Escherichia</taxon>
    </lineage>
</organism>
<comment type="function">
    <text evidence="1">ATP-dependent carboxylate-amine ligase which exhibits weak glutamate--cysteine ligase activity.</text>
</comment>
<comment type="catalytic activity">
    <reaction evidence="1">
        <text>L-cysteine + L-glutamate + ATP = gamma-L-glutamyl-L-cysteine + ADP + phosphate + H(+)</text>
        <dbReference type="Rhea" id="RHEA:13285"/>
        <dbReference type="ChEBI" id="CHEBI:15378"/>
        <dbReference type="ChEBI" id="CHEBI:29985"/>
        <dbReference type="ChEBI" id="CHEBI:30616"/>
        <dbReference type="ChEBI" id="CHEBI:35235"/>
        <dbReference type="ChEBI" id="CHEBI:43474"/>
        <dbReference type="ChEBI" id="CHEBI:58173"/>
        <dbReference type="ChEBI" id="CHEBI:456216"/>
        <dbReference type="EC" id="6.3.2.2"/>
    </reaction>
</comment>
<comment type="subunit">
    <text evidence="1">Homodimer.</text>
</comment>
<comment type="similarity">
    <text evidence="1">Belongs to the glutamate--cysteine ligase type 2 family. YbdK subfamily.</text>
</comment>
<proteinExistence type="inferred from homology"/>
<reference key="1">
    <citation type="journal article" date="2007" name="J. Bacteriol.">
        <title>The genome sequence of avian pathogenic Escherichia coli strain O1:K1:H7 shares strong similarities with human extraintestinal pathogenic E. coli genomes.</title>
        <authorList>
            <person name="Johnson T.J."/>
            <person name="Kariyawasam S."/>
            <person name="Wannemuehler Y."/>
            <person name="Mangiamele P."/>
            <person name="Johnson S.J."/>
            <person name="Doetkott C."/>
            <person name="Skyberg J.A."/>
            <person name="Lynne A.M."/>
            <person name="Johnson J.R."/>
            <person name="Nolan L.K."/>
        </authorList>
    </citation>
    <scope>NUCLEOTIDE SEQUENCE [LARGE SCALE GENOMIC DNA]</scope>
</reference>
<dbReference type="EC" id="6.3.2.2" evidence="1"/>
<dbReference type="EMBL" id="CP000468">
    <property type="protein sequence ID" value="ABJ00002.1"/>
    <property type="molecule type" value="Genomic_DNA"/>
</dbReference>
<dbReference type="RefSeq" id="WP_001130659.1">
    <property type="nucleotide sequence ID" value="NZ_CADILS010000006.1"/>
</dbReference>
<dbReference type="SMR" id="A1A8L2"/>
<dbReference type="KEGG" id="ecv:APECO1_1468"/>
<dbReference type="HOGENOM" id="CLU_044848_1_1_6"/>
<dbReference type="Proteomes" id="UP000008216">
    <property type="component" value="Chromosome"/>
</dbReference>
<dbReference type="GO" id="GO:0005524">
    <property type="term" value="F:ATP binding"/>
    <property type="evidence" value="ECO:0007669"/>
    <property type="project" value="UniProtKB-KW"/>
</dbReference>
<dbReference type="GO" id="GO:0004357">
    <property type="term" value="F:glutamate-cysteine ligase activity"/>
    <property type="evidence" value="ECO:0007669"/>
    <property type="project" value="UniProtKB-EC"/>
</dbReference>
<dbReference type="GO" id="GO:0042398">
    <property type="term" value="P:modified amino acid biosynthetic process"/>
    <property type="evidence" value="ECO:0007669"/>
    <property type="project" value="InterPro"/>
</dbReference>
<dbReference type="FunFam" id="3.30.590.20:FF:000002">
    <property type="entry name" value="Putative glutamate--cysteine ligase 2"/>
    <property type="match status" value="1"/>
</dbReference>
<dbReference type="Gene3D" id="3.30.590.20">
    <property type="match status" value="1"/>
</dbReference>
<dbReference type="HAMAP" id="MF_01609">
    <property type="entry name" value="Glu_cys_ligase_2"/>
    <property type="match status" value="1"/>
</dbReference>
<dbReference type="InterPro" id="IPR050141">
    <property type="entry name" value="GCL_type2/YbdK_subfam"/>
</dbReference>
<dbReference type="InterPro" id="IPR006336">
    <property type="entry name" value="GCS2"/>
</dbReference>
<dbReference type="InterPro" id="IPR014746">
    <property type="entry name" value="Gln_synth/guanido_kin_cat_dom"/>
</dbReference>
<dbReference type="InterPro" id="IPR011793">
    <property type="entry name" value="YbdK"/>
</dbReference>
<dbReference type="NCBIfam" id="TIGR02050">
    <property type="entry name" value="gshA_cyan_rel"/>
    <property type="match status" value="1"/>
</dbReference>
<dbReference type="NCBIfam" id="NF010040">
    <property type="entry name" value="PRK13516.1"/>
    <property type="match status" value="1"/>
</dbReference>
<dbReference type="PANTHER" id="PTHR36510">
    <property type="entry name" value="GLUTAMATE--CYSTEINE LIGASE 2-RELATED"/>
    <property type="match status" value="1"/>
</dbReference>
<dbReference type="PANTHER" id="PTHR36510:SF1">
    <property type="entry name" value="GLUTAMATE--CYSTEINE LIGASE 2-RELATED"/>
    <property type="match status" value="1"/>
</dbReference>
<dbReference type="Pfam" id="PF04107">
    <property type="entry name" value="GCS2"/>
    <property type="match status" value="1"/>
</dbReference>
<dbReference type="SUPFAM" id="SSF55931">
    <property type="entry name" value="Glutamine synthetase/guanido kinase"/>
    <property type="match status" value="1"/>
</dbReference>
<sequence length="372" mass="41618">MPLPDFHVSEPFTLGIELEMQVVNPPGYDLSQDSSMLIDAVKNQITAGEVKHDITESMLELATDVCRDINQAAGQFSAMQKVVLQAAADHHLEICGGGTHPFQKWQRQEVCDNERYQRTLENFGYLIQQATVFGQHVHVGCASGDDAIYLLHGLSRFVPHFIALSAASPYMQGTDTRFASSRPNIFSAFPDNGPMPWVSNWQQFEALFRCLSYTTMIDSIKDLHWDIRPSPHFGTVEVRVMDTPLTLSHAVNMAGLIQATAHWLLTERPFKHQEKDYLLYKFNRFQACRYGLEGVITDPHTGDRRSLTEATLRLLEKIAPSAHKIGASSAIEALHRQVVSGLNEAQLMRDFVADGGSLIGLVKKHCEIWAGE</sequence>
<name>GCS2_ECOK1</name>
<protein>
    <recommendedName>
        <fullName evidence="1">Putative glutamate--cysteine ligase 2</fullName>
        <ecNumber evidence="1">6.3.2.2</ecNumber>
    </recommendedName>
    <alternativeName>
        <fullName evidence="1">Gamma-glutamylcysteine synthetase 2</fullName>
        <shortName evidence="1">GCS 2</shortName>
        <shortName evidence="1">Gamma-GCS 2</shortName>
    </alternativeName>
</protein>
<gene>
    <name type="primary">ybdK</name>
    <name type="ordered locus">Ecok1_05080</name>
    <name type="ORF">APECO1_1468</name>
</gene>
<keyword id="KW-0067">ATP-binding</keyword>
<keyword id="KW-0436">Ligase</keyword>
<keyword id="KW-0547">Nucleotide-binding</keyword>
<keyword id="KW-1185">Reference proteome</keyword>
<accession>A1A8L2</accession>
<evidence type="ECO:0000255" key="1">
    <source>
        <dbReference type="HAMAP-Rule" id="MF_01609"/>
    </source>
</evidence>